<proteinExistence type="inferred from homology"/>
<dbReference type="EMBL" id="X04023">
    <property type="protein sequence ID" value="CAA27656.1"/>
    <property type="molecule type" value="Genomic_DNA"/>
</dbReference>
<dbReference type="PIR" id="S07316">
    <property type="entry name" value="S07316"/>
</dbReference>
<dbReference type="SMR" id="P05492"/>
<dbReference type="GO" id="GO:0005743">
    <property type="term" value="C:mitochondrial inner membrane"/>
    <property type="evidence" value="ECO:0007669"/>
    <property type="project" value="UniProtKB-SubCell"/>
</dbReference>
<dbReference type="GO" id="GO:0045259">
    <property type="term" value="C:proton-transporting ATP synthase complex"/>
    <property type="evidence" value="ECO:0007669"/>
    <property type="project" value="UniProtKB-KW"/>
</dbReference>
<dbReference type="GO" id="GO:0043531">
    <property type="term" value="F:ADP binding"/>
    <property type="evidence" value="ECO:0007669"/>
    <property type="project" value="TreeGrafter"/>
</dbReference>
<dbReference type="GO" id="GO:0005524">
    <property type="term" value="F:ATP binding"/>
    <property type="evidence" value="ECO:0007669"/>
    <property type="project" value="UniProtKB-KW"/>
</dbReference>
<dbReference type="GO" id="GO:0046933">
    <property type="term" value="F:proton-transporting ATP synthase activity, rotational mechanism"/>
    <property type="evidence" value="ECO:0007669"/>
    <property type="project" value="InterPro"/>
</dbReference>
<dbReference type="CDD" id="cd18113">
    <property type="entry name" value="ATP-synt_F1_alpha_C"/>
    <property type="match status" value="1"/>
</dbReference>
<dbReference type="CDD" id="cd18116">
    <property type="entry name" value="ATP-synt_F1_alpha_N"/>
    <property type="match status" value="1"/>
</dbReference>
<dbReference type="CDD" id="cd01132">
    <property type="entry name" value="F1-ATPase_alpha_CD"/>
    <property type="match status" value="1"/>
</dbReference>
<dbReference type="FunFam" id="1.20.150.20:FF:000001">
    <property type="entry name" value="ATP synthase subunit alpha"/>
    <property type="match status" value="1"/>
</dbReference>
<dbReference type="FunFam" id="2.40.30.20:FF:000001">
    <property type="entry name" value="ATP synthase subunit alpha"/>
    <property type="match status" value="1"/>
</dbReference>
<dbReference type="FunFam" id="3.40.50.300:FF:002432">
    <property type="entry name" value="ATP synthase subunit alpha, mitochondrial"/>
    <property type="match status" value="1"/>
</dbReference>
<dbReference type="Gene3D" id="2.40.30.20">
    <property type="match status" value="1"/>
</dbReference>
<dbReference type="Gene3D" id="1.20.150.20">
    <property type="entry name" value="ATP synthase alpha/beta chain, C-terminal domain"/>
    <property type="match status" value="1"/>
</dbReference>
<dbReference type="Gene3D" id="3.40.50.300">
    <property type="entry name" value="P-loop containing nucleotide triphosphate hydrolases"/>
    <property type="match status" value="1"/>
</dbReference>
<dbReference type="HAMAP" id="MF_01346">
    <property type="entry name" value="ATP_synth_alpha_bact"/>
    <property type="match status" value="1"/>
</dbReference>
<dbReference type="InterPro" id="IPR023366">
    <property type="entry name" value="ATP_synth_asu-like_sf"/>
</dbReference>
<dbReference type="InterPro" id="IPR000793">
    <property type="entry name" value="ATP_synth_asu_C"/>
</dbReference>
<dbReference type="InterPro" id="IPR038376">
    <property type="entry name" value="ATP_synth_asu_C_sf"/>
</dbReference>
<dbReference type="InterPro" id="IPR033732">
    <property type="entry name" value="ATP_synth_F1_a_nt-bd_dom"/>
</dbReference>
<dbReference type="InterPro" id="IPR005294">
    <property type="entry name" value="ATP_synth_F1_asu"/>
</dbReference>
<dbReference type="InterPro" id="IPR020003">
    <property type="entry name" value="ATPase_a/bsu_AS"/>
</dbReference>
<dbReference type="InterPro" id="IPR004100">
    <property type="entry name" value="ATPase_F1/V1/A1_a/bsu_N"/>
</dbReference>
<dbReference type="InterPro" id="IPR036121">
    <property type="entry name" value="ATPase_F1/V1/A1_a/bsu_N_sf"/>
</dbReference>
<dbReference type="InterPro" id="IPR000194">
    <property type="entry name" value="ATPase_F1/V1/A1_a/bsu_nucl-bd"/>
</dbReference>
<dbReference type="InterPro" id="IPR027417">
    <property type="entry name" value="P-loop_NTPase"/>
</dbReference>
<dbReference type="NCBIfam" id="TIGR00962">
    <property type="entry name" value="atpA"/>
    <property type="match status" value="1"/>
</dbReference>
<dbReference type="NCBIfam" id="NF009884">
    <property type="entry name" value="PRK13343.1"/>
    <property type="match status" value="1"/>
</dbReference>
<dbReference type="PANTHER" id="PTHR48082">
    <property type="entry name" value="ATP SYNTHASE SUBUNIT ALPHA, MITOCHONDRIAL"/>
    <property type="match status" value="1"/>
</dbReference>
<dbReference type="PANTHER" id="PTHR48082:SF2">
    <property type="entry name" value="ATP SYNTHASE SUBUNIT ALPHA, MITOCHONDRIAL"/>
    <property type="match status" value="1"/>
</dbReference>
<dbReference type="Pfam" id="PF00006">
    <property type="entry name" value="ATP-synt_ab"/>
    <property type="match status" value="1"/>
</dbReference>
<dbReference type="Pfam" id="PF00306">
    <property type="entry name" value="ATP-synt_ab_C"/>
    <property type="match status" value="1"/>
</dbReference>
<dbReference type="Pfam" id="PF02874">
    <property type="entry name" value="ATP-synt_ab_N"/>
    <property type="match status" value="1"/>
</dbReference>
<dbReference type="PIRSF" id="PIRSF039088">
    <property type="entry name" value="F_ATPase_subunit_alpha"/>
    <property type="match status" value="1"/>
</dbReference>
<dbReference type="SUPFAM" id="SSF47917">
    <property type="entry name" value="C-terminal domain of alpha and beta subunits of F1 ATP synthase"/>
    <property type="match status" value="1"/>
</dbReference>
<dbReference type="SUPFAM" id="SSF50615">
    <property type="entry name" value="N-terminal domain of alpha and beta subunits of F1 ATP synthase"/>
    <property type="match status" value="1"/>
</dbReference>
<dbReference type="SUPFAM" id="SSF52540">
    <property type="entry name" value="P-loop containing nucleoside triphosphate hydrolases"/>
    <property type="match status" value="1"/>
</dbReference>
<dbReference type="PROSITE" id="PS00152">
    <property type="entry name" value="ATPASE_ALPHA_BETA"/>
    <property type="match status" value="1"/>
</dbReference>
<geneLocation type="mitochondrion"/>
<feature type="chain" id="PRO_0000144402" description="ATP synthase subunit alpha, mitochondrial">
    <location>
        <begin position="1"/>
        <end position="511"/>
    </location>
</feature>
<feature type="binding site" evidence="1">
    <location>
        <begin position="171"/>
        <end position="178"/>
    </location>
    <ligand>
        <name>ATP</name>
        <dbReference type="ChEBI" id="CHEBI:30616"/>
    </ligand>
</feature>
<feature type="site" description="Required for activity" evidence="1">
    <location>
        <position position="373"/>
    </location>
</feature>
<keyword id="KW-0066">ATP synthesis</keyword>
<keyword id="KW-0067">ATP-binding</keyword>
<keyword id="KW-0139">CF(1)</keyword>
<keyword id="KW-0375">Hydrogen ion transport</keyword>
<keyword id="KW-0406">Ion transport</keyword>
<keyword id="KW-0472">Membrane</keyword>
<keyword id="KW-0496">Mitochondrion</keyword>
<keyword id="KW-0999">Mitochondrion inner membrane</keyword>
<keyword id="KW-0547">Nucleotide-binding</keyword>
<keyword id="KW-0813">Transport</keyword>
<reference key="1">
    <citation type="journal article" date="1986" name="Mol. Gen. Genet.">
        <title>Pseudocopies of the ATPase alpha-subunit gene in Oenothera mitochondria are present on different circular molecules.</title>
        <authorList>
            <person name="Schuster W."/>
            <person name="Brennicke A."/>
        </authorList>
    </citation>
    <scope>NUCLEOTIDE SEQUENCE [GENOMIC DNA]</scope>
</reference>
<sequence>MEFSPRAAELTTLLESRITNFYTNFQVDEIGRVISVGDGIARVYGLNEIQAGEMVEFASGVKGIALNLENENVGIVVFGSDTAIKEGDLVKRTGSIVDVPAGKSLLGRVVDALGVPIDGRGALGDHERRRVEVKVPGIIERKSVHEPMQTGLKAVDSLVPIGRGQRELIIGDRQTGKTAIAIDTILNQKQMNSRATSESETLYCVYVAIGQKRSTVAQLVQILSEGNALEYSILVAATASDPAPLQFLAPYSGCAMGEYFRDNGMHALIIYDDLSKQAVAYRQMSLLLRRPPGREAFPGDVFYLHSRLLERAAKRSDQTGAGSLTALPVIETQAGDVSAYIPTNVISITDGQICLETELFYRGIRPAINVGLSVSRVGSAAQLKAMKQVCGSLKLELAQYREVAAFAQFGSDLDAATQALLNRGARLTEILKQPQYAPLPIEKQIIVIYAAVNGFCDRMPLDRISQYERAIPQSVKQELLQSLVEKGGLNNERKIEPDAFLKENAKPYIKG</sequence>
<comment type="function">
    <text evidence="1">Mitochondrial membrane ATP synthase (F(1)F(0) ATP synthase or Complex V) produces ATP from ADP in the presence of a proton gradient across the membrane which is generated by electron transport complexes of the respiratory chain. F-type ATPases consist of two structural domains, F(1) - containing the extramembraneous catalytic core, and F(0) - containing the membrane proton channel, linked together by a central stalk and a peripheral stalk. During catalysis, ATP synthesis in the catalytic domain of F(1) is coupled via a rotary mechanism of the central stalk subunits to proton translocation. Subunits alpha and beta form the catalytic core in F(1). Rotation of the central stalk against the surrounding alpha(3)beta(3) subunits leads to hydrolysis of ATP in three separate catalytic sites on the beta subunits. Subunit alpha does not bear the catalytic high-affinity ATP-binding sites (By similarity).</text>
</comment>
<comment type="subunit">
    <text>F-type ATPases have 2 components, CF(1) - the catalytic core - and CF(0) - the membrane proton channel. CF(1) has five subunits: alpha(3), beta(3), gamma(1), delta(1), epsilon(1). CF(0) has three main subunits: a, b and c.</text>
</comment>
<comment type="subcellular location">
    <subcellularLocation>
        <location>Mitochondrion</location>
    </subcellularLocation>
    <subcellularLocation>
        <location>Mitochondrion inner membrane</location>
    </subcellularLocation>
    <text>Peripheral membrane protein.</text>
</comment>
<comment type="similarity">
    <text evidence="2">Belongs to the ATPase alpha/beta chains family.</text>
</comment>
<protein>
    <recommendedName>
        <fullName>ATP synthase subunit alpha, mitochondrial</fullName>
    </recommendedName>
</protein>
<organism>
    <name type="scientific">Oenothera biennis</name>
    <name type="common">German evening primrose</name>
    <name type="synonym">Onagra biennis</name>
    <dbReference type="NCBI Taxonomy" id="3942"/>
    <lineage>
        <taxon>Eukaryota</taxon>
        <taxon>Viridiplantae</taxon>
        <taxon>Streptophyta</taxon>
        <taxon>Embryophyta</taxon>
        <taxon>Tracheophyta</taxon>
        <taxon>Spermatophyta</taxon>
        <taxon>Magnoliopsida</taxon>
        <taxon>eudicotyledons</taxon>
        <taxon>Gunneridae</taxon>
        <taxon>Pentapetalae</taxon>
        <taxon>rosids</taxon>
        <taxon>malvids</taxon>
        <taxon>Myrtales</taxon>
        <taxon>Onagraceae</taxon>
        <taxon>Onagroideae</taxon>
        <taxon>Onagreae</taxon>
        <taxon>Oenothera</taxon>
    </lineage>
</organism>
<accession>P05492</accession>
<name>ATPAM_OENBI</name>
<gene>
    <name type="primary">ATPA</name>
</gene>
<evidence type="ECO:0000250" key="1"/>
<evidence type="ECO:0000305" key="2"/>